<reference key="1">
    <citation type="journal article" date="2016" name="Microb. Biotechnol.">
        <title>Ustilago maydis produces itaconic acid via the unusual intermediate trans-aconitate.</title>
        <authorList>
            <person name="Geiser E."/>
            <person name="Przybilla S.K."/>
            <person name="Friedrich A."/>
            <person name="Buckel W."/>
            <person name="Wierckx N."/>
            <person name="Blank L.M."/>
            <person name="Boelker M."/>
        </authorList>
    </citation>
    <scope>NUCLEOTIDE SEQUENCE [GENOMIC DNA]</scope>
    <scope>FUNCTION</scope>
    <scope>CATALYTIC ACTIVITY</scope>
    <scope>DISRUPTION PHENOTYPE</scope>
    <scope>SUBCELLULAR LOCATION</scope>
    <scope>PATHWAY</scope>
    <source>
        <strain>MB215</strain>
    </source>
</reference>
<reference key="2">
    <citation type="journal article" date="2016" name="Metab. Eng.">
        <title>Genetic and biochemical insights into the itaconate pathway of Ustilago maydis enable enhanced production.</title>
        <authorList>
            <person name="Geiser E."/>
            <person name="Przybilla S.K."/>
            <person name="Engel M."/>
            <person name="Kleineberg W."/>
            <person name="Buettner L."/>
            <person name="Sarikaya E."/>
            <person name="Hartog T.D."/>
            <person name="Klankermayer J."/>
            <person name="Leitner W."/>
            <person name="Boelker M."/>
            <person name="Blank L.M."/>
            <person name="Wierckx N."/>
        </authorList>
    </citation>
    <scope>FUNCTION</scope>
</reference>
<accession>A0A0U2UYC4</accession>
<organism>
    <name type="scientific">Mycosarcoma maydis</name>
    <name type="common">Corn smut fungus</name>
    <name type="synonym">Ustilago maydis</name>
    <dbReference type="NCBI Taxonomy" id="5270"/>
    <lineage>
        <taxon>Eukaryota</taxon>
        <taxon>Fungi</taxon>
        <taxon>Dikarya</taxon>
        <taxon>Basidiomycota</taxon>
        <taxon>Ustilaginomycotina</taxon>
        <taxon>Ustilaginomycetes</taxon>
        <taxon>Ustilaginales</taxon>
        <taxon>Ustilaginaceae</taxon>
        <taxon>Mycosarcoma</taxon>
    </lineage>
</organism>
<keyword id="KW-0963">Cytoplasm</keyword>
<keyword id="KW-0456">Lyase</keyword>
<keyword id="KW-0539">Nucleus</keyword>
<dbReference type="EC" id="4.1.1.113" evidence="2"/>
<dbReference type="EMBL" id="KT852988">
    <property type="protein sequence ID" value="ALS30796.1"/>
    <property type="molecule type" value="Genomic_DNA"/>
</dbReference>
<dbReference type="RefSeq" id="XP_011388155.1">
    <property type="nucleotide sequence ID" value="XM_011389853.1"/>
</dbReference>
<dbReference type="SMR" id="A0A0U2UYC4"/>
<dbReference type="GeneID" id="23565066"/>
<dbReference type="KEGG" id="uma:UMAG_05076"/>
<dbReference type="VEuPathDB" id="FungiDB:UMAG_05076"/>
<dbReference type="OMA" id="HTQRDEW"/>
<dbReference type="BioCyc" id="MetaCyc:MONOMER-20618"/>
<dbReference type="BRENDA" id="4.1.1.113">
    <property type="organism ID" value="6587"/>
</dbReference>
<dbReference type="GO" id="GO:0005829">
    <property type="term" value="C:cytosol"/>
    <property type="evidence" value="ECO:0007669"/>
    <property type="project" value="UniProtKB-SubCell"/>
</dbReference>
<dbReference type="GO" id="GO:0005634">
    <property type="term" value="C:nucleus"/>
    <property type="evidence" value="ECO:0007669"/>
    <property type="project" value="UniProtKB-SubCell"/>
</dbReference>
<dbReference type="GO" id="GO:0016829">
    <property type="term" value="F:lyase activity"/>
    <property type="evidence" value="ECO:0007669"/>
    <property type="project" value="UniProtKB-KW"/>
</dbReference>
<dbReference type="CDD" id="cd01597">
    <property type="entry name" value="pCLME"/>
    <property type="match status" value="1"/>
</dbReference>
<dbReference type="Gene3D" id="1.10.40.30">
    <property type="entry name" value="Fumarase/aspartase (C-terminal domain)"/>
    <property type="match status" value="1"/>
</dbReference>
<dbReference type="Gene3D" id="1.20.200.10">
    <property type="entry name" value="Fumarase/aspartase (Central domain)"/>
    <property type="match status" value="1"/>
</dbReference>
<dbReference type="InterPro" id="IPR019468">
    <property type="entry name" value="AdenyloSucc_lyase_C"/>
</dbReference>
<dbReference type="InterPro" id="IPR000362">
    <property type="entry name" value="Fumarate_lyase_fam"/>
</dbReference>
<dbReference type="InterPro" id="IPR022761">
    <property type="entry name" value="Fumarate_lyase_N"/>
</dbReference>
<dbReference type="InterPro" id="IPR008948">
    <property type="entry name" value="L-Aspartase-like"/>
</dbReference>
<dbReference type="PANTHER" id="PTHR43172">
    <property type="entry name" value="ADENYLOSUCCINATE LYASE"/>
    <property type="match status" value="1"/>
</dbReference>
<dbReference type="PANTHER" id="PTHR43172:SF2">
    <property type="entry name" value="ADENYLOSUCCINATE LYASE C-TERMINAL DOMAIN-CONTAINING PROTEIN"/>
    <property type="match status" value="1"/>
</dbReference>
<dbReference type="Pfam" id="PF10397">
    <property type="entry name" value="ADSL_C"/>
    <property type="match status" value="1"/>
</dbReference>
<dbReference type="Pfam" id="PF00206">
    <property type="entry name" value="Lyase_1"/>
    <property type="match status" value="1"/>
</dbReference>
<dbReference type="PRINTS" id="PR00149">
    <property type="entry name" value="FUMRATELYASE"/>
</dbReference>
<dbReference type="SMART" id="SM00998">
    <property type="entry name" value="ADSL_C"/>
    <property type="match status" value="1"/>
</dbReference>
<dbReference type="SUPFAM" id="SSF48557">
    <property type="entry name" value="L-aspartase-like"/>
    <property type="match status" value="1"/>
</dbReference>
<gene>
    <name evidence="4" type="primary">TAD1</name>
    <name type="ORF">UMAG_05076</name>
</gene>
<sequence length="493" mass="53972">MAPALNANPTTKRDELSAPSASHKLGMSSMASRAAGGGLKLTGLPDLSDSAGTLSDIFGTPQMREIWSDQNRVACYLEIEAALAIVQADLGIIPKNAAHEIVEHCRVQEIDWALYKQKTELIGYPVLGIVQQLVANCKDGLGEYCHWGATTQDITDTATVMQIRQSLTLVKQRLDSIVSSLEHLAEQHRNVPMAARSNLKQAVPITFGFKMARFLATFRRHQQRLVELEKRVYTLEFGGAAGNLSSLGDQGIATHDALAKMLDLAPAEIAWHTEHDRFAEVGTFLGLLTGTLAKLATDIKLMSQTEVGEVGEPFISNRGSSSTMPQKNNPISCVYIHACAANVRQGAAALLDAMQSDHERGTGPWEIIWVQLPLMMNWTSAALNNADFVLRGLQVFPDAMQHNLDLSKGLIVSEAVMMGLGNTLGRQYAHDAVYECCRTAFVQDRPLLDVLLENHEIASKLDRTELEKLCDPANYLGQCSQWIDRVLSRPSSA</sequence>
<proteinExistence type="evidence at protein level"/>
<comment type="function">
    <text evidence="2 3">Trans-aconitate decarboxylase; part of the gene cluster that mediates the biosynthesis of itaconic acid and 2-hydroxyparaconate (PubMed:26639528, PubMed:27750034). Cis-aconitate is secreted by the mitochondrial tricarboxylate transporter MTT1. In the cytosol cis-aconitate is converted into trans-aconitate via isomerization by the aconitate-delta-isomerase ADI1 (PubMed:26639528). Decarboxylation of trans-aconitate by the trans-aconitate decarboxylase TAD1 then leads then to the production of itaconic acid (PubMed:26639528). The cytochrome P450 monooxygenase CYP3 further converts itaconate to 2-hydroxyparaconate via oxidation of the double bond, leading to a transient epoxide, which can subsequently be lactonized to produce 2-hydroxyparaconate (PubMed:27750034). Secretion of itaconate and possibly 2-hydroxyparaconate into the medium is mediated by the major facilitator ITP1 (PubMed:26639528, PubMed:27750034). The glyoxalase domain-containing protein RDO1 is not involved in the biosynthesis of itaconate and 2-hydroxyparaconate, however, it might play a role in the further conversion of 2-hydroxyparaconate to itatartarate (PubMed:27750034).</text>
</comment>
<comment type="catalytic activity">
    <reaction evidence="2">
        <text>trans-aconitate + H(+) = itaconate + CO2</text>
        <dbReference type="Rhea" id="RHEA:57728"/>
        <dbReference type="ChEBI" id="CHEBI:15378"/>
        <dbReference type="ChEBI" id="CHEBI:15708"/>
        <dbReference type="ChEBI" id="CHEBI:16526"/>
        <dbReference type="ChEBI" id="CHEBI:17240"/>
        <dbReference type="EC" id="4.1.1.113"/>
    </reaction>
    <physiologicalReaction direction="left-to-right" evidence="2">
        <dbReference type="Rhea" id="RHEA:57729"/>
    </physiologicalReaction>
</comment>
<comment type="pathway">
    <text evidence="2">Secondary metabolite biosynthesis.</text>
</comment>
<comment type="subcellular location">
    <subcellularLocation>
        <location evidence="2">Cytoplasm</location>
        <location evidence="2">Cytosol</location>
    </subcellularLocation>
    <subcellularLocation>
        <location evidence="2">Nucleus</location>
    </subcellularLocation>
</comment>
<comment type="disruption phenotype">
    <text evidence="2">Abolishes the production of itaconic acid (PubMed:26639528).</text>
</comment>
<comment type="similarity">
    <text evidence="5">Belongs to the class-II fumarase/aspartase family.</text>
</comment>
<name>TAD1_MYCMD</name>
<protein>
    <recommendedName>
        <fullName evidence="4">Trans-aconitate decarboxylase 1</fullName>
        <ecNumber evidence="2">4.1.1.113</ecNumber>
    </recommendedName>
    <alternativeName>
        <fullName evidence="5">Itaconic acid/2-hydroxyparaconate biosynthesis cluster protein TAD1</fullName>
    </alternativeName>
</protein>
<evidence type="ECO:0000256" key="1">
    <source>
        <dbReference type="SAM" id="MobiDB-lite"/>
    </source>
</evidence>
<evidence type="ECO:0000269" key="2">
    <source>
    </source>
</evidence>
<evidence type="ECO:0000269" key="3">
    <source>
    </source>
</evidence>
<evidence type="ECO:0000303" key="4">
    <source>
    </source>
</evidence>
<evidence type="ECO:0000305" key="5"/>
<feature type="chain" id="PRO_0000438676" description="Trans-aconitate decarboxylase 1">
    <location>
        <begin position="1"/>
        <end position="493"/>
    </location>
</feature>
<feature type="region of interest" description="Disordered" evidence="1">
    <location>
        <begin position="1"/>
        <end position="22"/>
    </location>
</feature>